<organism>
    <name type="scientific">Clostridium beijerinckii (strain ATCC 51743 / NCIMB 8052)</name>
    <name type="common">Clostridium acetobutylicum</name>
    <dbReference type="NCBI Taxonomy" id="290402"/>
    <lineage>
        <taxon>Bacteria</taxon>
        <taxon>Bacillati</taxon>
        <taxon>Bacillota</taxon>
        <taxon>Clostridia</taxon>
        <taxon>Eubacteriales</taxon>
        <taxon>Clostridiaceae</taxon>
        <taxon>Clostridium</taxon>
    </lineage>
</organism>
<dbReference type="EC" id="4.1.1.4" evidence="1"/>
<dbReference type="EMBL" id="CP000721">
    <property type="protein sequence ID" value="ABR35950.1"/>
    <property type="molecule type" value="Genomic_DNA"/>
</dbReference>
<dbReference type="RefSeq" id="WP_012059998.1">
    <property type="nucleotide sequence ID" value="NC_009617.1"/>
</dbReference>
<dbReference type="SMR" id="A6M020"/>
<dbReference type="KEGG" id="cbe:Cbei_3835"/>
<dbReference type="eggNOG" id="COG4689">
    <property type="taxonomic scope" value="Bacteria"/>
</dbReference>
<dbReference type="HOGENOM" id="CLU_077089_0_0_9"/>
<dbReference type="BRENDA" id="4.1.1.4">
    <property type="organism ID" value="1460"/>
</dbReference>
<dbReference type="Proteomes" id="UP000000565">
    <property type="component" value="Chromosome"/>
</dbReference>
<dbReference type="GO" id="GO:0047602">
    <property type="term" value="F:acetoacetate decarboxylase activity"/>
    <property type="evidence" value="ECO:0007669"/>
    <property type="project" value="UniProtKB-UniRule"/>
</dbReference>
<dbReference type="Gene3D" id="2.40.400.10">
    <property type="entry name" value="Acetoacetate decarboxylase-like"/>
    <property type="match status" value="1"/>
</dbReference>
<dbReference type="HAMAP" id="MF_00597">
    <property type="entry name" value="ADC"/>
    <property type="match status" value="1"/>
</dbReference>
<dbReference type="InterPro" id="IPR010451">
    <property type="entry name" value="Acetoacetate_decarboxylase"/>
</dbReference>
<dbReference type="InterPro" id="IPR023653">
    <property type="entry name" value="Acetoacetate_decarboxylase_bac"/>
</dbReference>
<dbReference type="InterPro" id="IPR023375">
    <property type="entry name" value="ADC_dom_sf"/>
</dbReference>
<dbReference type="NCBIfam" id="NF002614">
    <property type="entry name" value="PRK02265.1"/>
    <property type="match status" value="1"/>
</dbReference>
<dbReference type="Pfam" id="PF06314">
    <property type="entry name" value="ADC"/>
    <property type="match status" value="1"/>
</dbReference>
<dbReference type="SUPFAM" id="SSF160104">
    <property type="entry name" value="Acetoacetate decarboxylase-like"/>
    <property type="match status" value="1"/>
</dbReference>
<accession>A6M020</accession>
<feature type="chain" id="PRO_1000082443" description="Acetoacetate decarboxylase">
    <location>
        <begin position="1"/>
        <end position="246"/>
    </location>
</feature>
<feature type="active site" description="Schiff-base intermediate with acetoacetate" evidence="1">
    <location>
        <position position="115"/>
    </location>
</feature>
<proteinExistence type="inferred from homology"/>
<sequence length="246" mass="27379">MLESEVSKQITTPLAAPAFPRGPYRFHNREYLNIIYRTDLDALRKIVPEPLELDRAYVRFEMMAMPDTTGLGSYTECGQAIPVKYNGVKGDYLHMMYLDNEPAIAVGRESSAYPKKLGYPKLFVDSDTLVGTLKYGTLPVATATMGYKHEPLDLKEAYAQIARPNFMLKIIQGYDGKPRICELICAENTDITIHGAWTGSARLQLFSHALAPLADLPVLEIVSASHILTDLTLGTPKVVHDYLSVK</sequence>
<evidence type="ECO:0000255" key="1">
    <source>
        <dbReference type="HAMAP-Rule" id="MF_00597"/>
    </source>
</evidence>
<name>ADC_CLOB8</name>
<protein>
    <recommendedName>
        <fullName evidence="1">Acetoacetate decarboxylase</fullName>
        <shortName evidence="1">AAD</shortName>
        <shortName evidence="1">ADC</shortName>
        <ecNumber evidence="1">4.1.1.4</ecNumber>
    </recommendedName>
</protein>
<keyword id="KW-0210">Decarboxylase</keyword>
<keyword id="KW-0456">Lyase</keyword>
<keyword id="KW-0704">Schiff base</keyword>
<reference key="1">
    <citation type="submission" date="2007-06" db="EMBL/GenBank/DDBJ databases">
        <title>Complete sequence of Clostridium beijerinckii NCIMB 8052.</title>
        <authorList>
            <consortium name="US DOE Joint Genome Institute"/>
            <person name="Copeland A."/>
            <person name="Lucas S."/>
            <person name="Lapidus A."/>
            <person name="Barry K."/>
            <person name="Detter J.C."/>
            <person name="Glavina del Rio T."/>
            <person name="Hammon N."/>
            <person name="Israni S."/>
            <person name="Dalin E."/>
            <person name="Tice H."/>
            <person name="Pitluck S."/>
            <person name="Sims D."/>
            <person name="Brettin T."/>
            <person name="Bruce D."/>
            <person name="Tapia R."/>
            <person name="Brainard J."/>
            <person name="Schmutz J."/>
            <person name="Larimer F."/>
            <person name="Land M."/>
            <person name="Hauser L."/>
            <person name="Kyrpides N."/>
            <person name="Mikhailova N."/>
            <person name="Bennet G."/>
            <person name="Cann I."/>
            <person name="Chen J.-S."/>
            <person name="Contreras A.L."/>
            <person name="Jones D."/>
            <person name="Kashket E."/>
            <person name="Mitchell W."/>
            <person name="Stoddard S."/>
            <person name="Schwarz W."/>
            <person name="Qureshi N."/>
            <person name="Young M."/>
            <person name="Shi Z."/>
            <person name="Ezeji T."/>
            <person name="White B."/>
            <person name="Blaschek H."/>
            <person name="Richardson P."/>
        </authorList>
    </citation>
    <scope>NUCLEOTIDE SEQUENCE [LARGE SCALE GENOMIC DNA]</scope>
    <source>
        <strain>ATCC 51743 / NCIMB 8052</strain>
    </source>
</reference>
<gene>
    <name evidence="1" type="primary">adc</name>
    <name type="ordered locus">Cbei_3835</name>
</gene>
<comment type="function">
    <text evidence="1">Catalyzes the conversion of acetoacetate to acetone and carbon dioxide.</text>
</comment>
<comment type="catalytic activity">
    <reaction evidence="1">
        <text>acetoacetate + H(+) = acetone + CO2</text>
        <dbReference type="Rhea" id="RHEA:19729"/>
        <dbReference type="ChEBI" id="CHEBI:13705"/>
        <dbReference type="ChEBI" id="CHEBI:15347"/>
        <dbReference type="ChEBI" id="CHEBI:15378"/>
        <dbReference type="ChEBI" id="CHEBI:16526"/>
        <dbReference type="EC" id="4.1.1.4"/>
    </reaction>
</comment>
<comment type="similarity">
    <text evidence="1">Belongs to the ADC family.</text>
</comment>